<feature type="initiator methionine" description="Removed; by host" evidence="1">
    <location>
        <position position="1"/>
    </location>
</feature>
<feature type="chain" id="PRO_0000099255" description="Virion membrane protein A16">
    <location>
        <begin position="2"/>
        <end position="378"/>
    </location>
</feature>
<feature type="topological domain" description="Virion surface" evidence="2">
    <location>
        <begin position="2"/>
        <end position="342"/>
    </location>
</feature>
<feature type="transmembrane region" description="Helical; Signal-anchor for type II membrane protein" evidence="2">
    <location>
        <begin position="343"/>
        <end position="363"/>
    </location>
</feature>
<feature type="topological domain" description="Intravirion" evidence="2">
    <location>
        <begin position="364"/>
        <end position="378"/>
    </location>
</feature>
<feature type="lipid moiety-binding region" description="N-myristoyl glycine; by host" evidence="1">
    <location>
        <position position="2"/>
    </location>
</feature>
<accession>Q6RZG6</accession>
<name>A16_RABPU</name>
<proteinExistence type="evidence at transcript level"/>
<protein>
    <recommendedName>
        <fullName>Virion membrane protein A16</fullName>
    </recommendedName>
</protein>
<comment type="function">
    <text evidence="1">Envelope protein part of the entry-fusion complex responsible for the virus membrane fusion with host cell membrane during virus entry. Also plays a role in cell-cell fusion (syncytium formation) (By similarity).</text>
</comment>
<comment type="subunit">
    <text evidence="1">Part of a stable entry-fusion complex (EFC) which is at least composed of proteins A16, A21, A28, G3, G9, H2, J5, and L5. Formation of the viral membrane is necessary for the assembly of the complex. Interacts with G9 (By similarity).</text>
</comment>
<comment type="subcellular location">
    <subcellularLocation>
        <location evidence="3">Virion membrane</location>
        <topology evidence="3">Single-pass type II membrane protein</topology>
    </subcellularLocation>
    <text evidence="1">Component of the mature virion (MV) membrane. The mature virion is located in the cytoplasm of infected cells and is probably released by cell lysis.</text>
</comment>
<comment type="induction">
    <text>Expressed in the late phase of the viral replicative cycle.</text>
</comment>
<comment type="PTM">
    <text evidence="1">Most cysteines are linked by disulfide bonds. They are created by the viral disulfide bond formation pathway, a poxvirus-specific redox pathway that operates on the cytoplasmic side of the MV membranes (By similarity).</text>
</comment>
<comment type="similarity">
    <text evidence="3">Belongs to the poxviridae A16/G9/J5 family.</text>
</comment>
<organismHost>
    <name type="scientific">Oryctolagus cuniculus</name>
    <name type="common">Rabbit</name>
    <dbReference type="NCBI Taxonomy" id="9986"/>
</organismHost>
<sequence>MGAAVTLNRIKIAPGIADIRDKYMELGFNYPEYNRAVKFAEESYTYYYETSPGEIKPKFCLIDGMSIDHCSSFIVPEFAKQYVLIHGEPCSSFKFRPGSLIYYQNEVTPEYIKDLKHATDYIASGQRCHFIKKDYLLGDSDSVAKCCSKTNTKHCPKIFNNNYKTEHCDDFMTGFCRNDPGNPNCLEWLRAKRKPAMSTYSDICSKHMDARYCSEFIRIIRPDYFTFGDTALYVFCNDHKGNRNCWCANYPKSNSGDKYLGPRVCWLHECTDESRDRKWLYYNQDVQRTRCKYVGCTINVNSLALKNSQAELTSNCTRTTSAVGDVHHPGEPVVKDKIKLPTWLGAAITLVVISVIFYFISIYSRPKIKTNDINVRRR</sequence>
<dbReference type="EMBL" id="AY484669">
    <property type="protein sequence ID" value="AAS49838.1"/>
    <property type="molecule type" value="Genomic_DNA"/>
</dbReference>
<dbReference type="SMR" id="Q6RZG6"/>
<dbReference type="Proteomes" id="UP000166173">
    <property type="component" value="Segment"/>
</dbReference>
<dbReference type="GO" id="GO:0016020">
    <property type="term" value="C:membrane"/>
    <property type="evidence" value="ECO:0007669"/>
    <property type="project" value="UniProtKB-KW"/>
</dbReference>
<dbReference type="GO" id="GO:0019031">
    <property type="term" value="C:viral envelope"/>
    <property type="evidence" value="ECO:0007669"/>
    <property type="project" value="UniProtKB-KW"/>
</dbReference>
<dbReference type="GO" id="GO:0055036">
    <property type="term" value="C:virion membrane"/>
    <property type="evidence" value="ECO:0007669"/>
    <property type="project" value="UniProtKB-SubCell"/>
</dbReference>
<dbReference type="GO" id="GO:0008289">
    <property type="term" value="F:lipid binding"/>
    <property type="evidence" value="ECO:0007669"/>
    <property type="project" value="UniProtKB-KW"/>
</dbReference>
<dbReference type="GO" id="GO:0039663">
    <property type="term" value="P:membrane fusion involved in viral entry into host cell"/>
    <property type="evidence" value="ECO:0007669"/>
    <property type="project" value="UniProtKB-KW"/>
</dbReference>
<dbReference type="GO" id="GO:0046718">
    <property type="term" value="P:symbiont entry into host cell"/>
    <property type="evidence" value="ECO:0007669"/>
    <property type="project" value="UniProtKB-KW"/>
</dbReference>
<dbReference type="InterPro" id="IPR004251">
    <property type="entry name" value="Pox_virus_G9/A16"/>
</dbReference>
<dbReference type="Pfam" id="PF03003">
    <property type="entry name" value="Pox_G9-A16"/>
    <property type="match status" value="1"/>
</dbReference>
<evidence type="ECO:0000250" key="1"/>
<evidence type="ECO:0000255" key="2"/>
<evidence type="ECO:0000305" key="3"/>
<reference key="1">
    <citation type="journal article" date="2005" name="J. Gen. Virol.">
        <title>Complete coding sequences of the rabbitpox virus genome.</title>
        <authorList>
            <person name="Li G."/>
            <person name="Chen N."/>
            <person name="Roper R.L."/>
            <person name="Feng Z."/>
            <person name="Hunter A.L."/>
            <person name="Danila M."/>
            <person name="Lefkowitz E.J."/>
            <person name="Buller R.M.L."/>
            <person name="Upton C."/>
        </authorList>
    </citation>
    <scope>NUCLEOTIDE SEQUENCE [LARGE SCALE GENOMIC DNA]</scope>
</reference>
<gene>
    <name type="ordered locus">RPXV125</name>
</gene>
<organism>
    <name type="scientific">Rabbitpox virus (strain Utrecht)</name>
    <name type="common">RPV</name>
    <dbReference type="NCBI Taxonomy" id="45417"/>
    <lineage>
        <taxon>Viruses</taxon>
        <taxon>Varidnaviria</taxon>
        <taxon>Bamfordvirae</taxon>
        <taxon>Nucleocytoviricota</taxon>
        <taxon>Pokkesviricetes</taxon>
        <taxon>Chitovirales</taxon>
        <taxon>Poxviridae</taxon>
        <taxon>Chordopoxvirinae</taxon>
        <taxon>Orthopoxvirus</taxon>
        <taxon>Vaccinia virus</taxon>
    </lineage>
</organism>
<keyword id="KW-1015">Disulfide bond</keyword>
<keyword id="KW-1168">Fusion of virus membrane with host membrane</keyword>
<keyword id="KW-0426">Late protein</keyword>
<keyword id="KW-0446">Lipid-binding</keyword>
<keyword id="KW-0449">Lipoprotein</keyword>
<keyword id="KW-0472">Membrane</keyword>
<keyword id="KW-0519">Myristate</keyword>
<keyword id="KW-0735">Signal-anchor</keyword>
<keyword id="KW-0812">Transmembrane</keyword>
<keyword id="KW-1133">Transmembrane helix</keyword>
<keyword id="KW-0261">Viral envelope protein</keyword>
<keyword id="KW-1162">Viral penetration into host cytoplasm</keyword>
<keyword id="KW-0946">Virion</keyword>
<keyword id="KW-1160">Virus entry into host cell</keyword>